<sequence length="511" mass="58811">MTMEINNTDPSENMPLPDDVDLSGSRAFDDSKLAKLNGIISQGLDPYPYRFEKNGDICEILVKFEDFEKNEGLSVRTAGRLYNIRKHGKMIFADLGDQTGRIQVLIRKGNLPDEEFATFKNLMDSGDIIGIQGELFRTKRGENSISVSEFSLLSKSLCALPEKFHGLKDVETRYRKRYLDLIVNAEKREIFVMRSKLISEIRRFLADREFLEFETPILQTVYGGANARPFKTFHNCLGQNLFLRIAPELYLKRLVVGGYEKVFEISKNFRNEDIDTTHNPEFTMIEVYEAYRDYNDMMDLTEALISELVFRLTGGYEVKMGENTINLRSPWKRISMEGALKEYAGLDVFSHSLEELKQIAIQNRIEDYEKAKSHGEFLALLFEGLVEDKLVNPTFIYDFPVENSPLAKNHREKEGFVERFELFLNGWELANGYSELNDPLEQEKRFEEQDKKRKLGDLEAQTVDYDFINALGYGLPPTGGMGLGIDRLTMILAGLESIKEVILFPQMKRED</sequence>
<protein>
    <recommendedName>
        <fullName evidence="1">Lysine--tRNA ligase 2</fullName>
        <ecNumber evidence="1">6.1.1.6</ecNumber>
    </recommendedName>
    <alternativeName>
        <fullName evidence="1">Lysyl-tRNA synthetase 2</fullName>
        <shortName evidence="1">LysRS 2</shortName>
    </alternativeName>
</protein>
<feature type="chain" id="PRO_0000152711" description="Lysine--tRNA ligase 2">
    <location>
        <begin position="1"/>
        <end position="511"/>
    </location>
</feature>
<feature type="region of interest" description="Disordered" evidence="2">
    <location>
        <begin position="1"/>
        <end position="21"/>
    </location>
</feature>
<feature type="compositionally biased region" description="Polar residues" evidence="2">
    <location>
        <begin position="1"/>
        <end position="11"/>
    </location>
</feature>
<feature type="binding site" evidence="1">
    <location>
        <position position="421"/>
    </location>
    <ligand>
        <name>Mg(2+)</name>
        <dbReference type="ChEBI" id="CHEBI:18420"/>
        <label>1</label>
    </ligand>
</feature>
<feature type="binding site" evidence="1">
    <location>
        <position position="428"/>
    </location>
    <ligand>
        <name>Mg(2+)</name>
        <dbReference type="ChEBI" id="CHEBI:18420"/>
        <label>1</label>
    </ligand>
</feature>
<feature type="binding site" evidence="1">
    <location>
        <position position="428"/>
    </location>
    <ligand>
        <name>Mg(2+)</name>
        <dbReference type="ChEBI" id="CHEBI:18420"/>
        <label>2</label>
    </ligand>
</feature>
<accession>Q8TSN5</accession>
<proteinExistence type="inferred from homology"/>
<evidence type="ECO:0000255" key="1">
    <source>
        <dbReference type="HAMAP-Rule" id="MF_00252"/>
    </source>
</evidence>
<evidence type="ECO:0000256" key="2">
    <source>
        <dbReference type="SAM" id="MobiDB-lite"/>
    </source>
</evidence>
<reference key="1">
    <citation type="journal article" date="2002" name="Genome Res.">
        <title>The genome of Methanosarcina acetivorans reveals extensive metabolic and physiological diversity.</title>
        <authorList>
            <person name="Galagan J.E."/>
            <person name="Nusbaum C."/>
            <person name="Roy A."/>
            <person name="Endrizzi M.G."/>
            <person name="Macdonald P."/>
            <person name="FitzHugh W."/>
            <person name="Calvo S."/>
            <person name="Engels R."/>
            <person name="Smirnov S."/>
            <person name="Atnoor D."/>
            <person name="Brown A."/>
            <person name="Allen N."/>
            <person name="Naylor J."/>
            <person name="Stange-Thomann N."/>
            <person name="DeArellano K."/>
            <person name="Johnson R."/>
            <person name="Linton L."/>
            <person name="McEwan P."/>
            <person name="McKernan K."/>
            <person name="Talamas J."/>
            <person name="Tirrell A."/>
            <person name="Ye W."/>
            <person name="Zimmer A."/>
            <person name="Barber R.D."/>
            <person name="Cann I."/>
            <person name="Graham D.E."/>
            <person name="Grahame D.A."/>
            <person name="Guss A.M."/>
            <person name="Hedderich R."/>
            <person name="Ingram-Smith C."/>
            <person name="Kuettner H.C."/>
            <person name="Krzycki J.A."/>
            <person name="Leigh J.A."/>
            <person name="Li W."/>
            <person name="Liu J."/>
            <person name="Mukhopadhyay B."/>
            <person name="Reeve J.N."/>
            <person name="Smith K."/>
            <person name="Springer T.A."/>
            <person name="Umayam L.A."/>
            <person name="White O."/>
            <person name="White R.H."/>
            <person name="de Macario E.C."/>
            <person name="Ferry J.G."/>
            <person name="Jarrell K.F."/>
            <person name="Jing H."/>
            <person name="Macario A.J.L."/>
            <person name="Paulsen I.T."/>
            <person name="Pritchett M."/>
            <person name="Sowers K.R."/>
            <person name="Swanson R.V."/>
            <person name="Zinder S.H."/>
            <person name="Lander E."/>
            <person name="Metcalf W.W."/>
            <person name="Birren B."/>
        </authorList>
    </citation>
    <scope>NUCLEOTIDE SEQUENCE [LARGE SCALE GENOMIC DNA]</scope>
    <source>
        <strain>ATCC 35395 / DSM 2834 / JCM 12185 / C2A</strain>
    </source>
</reference>
<keyword id="KW-0030">Aminoacyl-tRNA synthetase</keyword>
<keyword id="KW-0067">ATP-binding</keyword>
<keyword id="KW-0963">Cytoplasm</keyword>
<keyword id="KW-0436">Ligase</keyword>
<keyword id="KW-0460">Magnesium</keyword>
<keyword id="KW-0479">Metal-binding</keyword>
<keyword id="KW-0547">Nucleotide-binding</keyword>
<keyword id="KW-0648">Protein biosynthesis</keyword>
<keyword id="KW-1185">Reference proteome</keyword>
<comment type="catalytic activity">
    <reaction evidence="1">
        <text>tRNA(Lys) + L-lysine + ATP = L-lysyl-tRNA(Lys) + AMP + diphosphate</text>
        <dbReference type="Rhea" id="RHEA:20792"/>
        <dbReference type="Rhea" id="RHEA-COMP:9696"/>
        <dbReference type="Rhea" id="RHEA-COMP:9697"/>
        <dbReference type="ChEBI" id="CHEBI:30616"/>
        <dbReference type="ChEBI" id="CHEBI:32551"/>
        <dbReference type="ChEBI" id="CHEBI:33019"/>
        <dbReference type="ChEBI" id="CHEBI:78442"/>
        <dbReference type="ChEBI" id="CHEBI:78529"/>
        <dbReference type="ChEBI" id="CHEBI:456215"/>
        <dbReference type="EC" id="6.1.1.6"/>
    </reaction>
</comment>
<comment type="cofactor">
    <cofactor evidence="1">
        <name>Mg(2+)</name>
        <dbReference type="ChEBI" id="CHEBI:18420"/>
    </cofactor>
    <text evidence="1">Binds 3 Mg(2+) ions per subunit.</text>
</comment>
<comment type="subunit">
    <text evidence="1">Homodimer.</text>
</comment>
<comment type="subcellular location">
    <subcellularLocation>
        <location>Cytoplasm</location>
    </subcellularLocation>
</comment>
<comment type="similarity">
    <text evidence="1">Belongs to the class-II aminoacyl-tRNA synthetase family.</text>
</comment>
<organism>
    <name type="scientific">Methanosarcina acetivorans (strain ATCC 35395 / DSM 2834 / JCM 12185 / C2A)</name>
    <dbReference type="NCBI Taxonomy" id="188937"/>
    <lineage>
        <taxon>Archaea</taxon>
        <taxon>Methanobacteriati</taxon>
        <taxon>Methanobacteriota</taxon>
        <taxon>Stenosarchaea group</taxon>
        <taxon>Methanomicrobia</taxon>
        <taxon>Methanosarcinales</taxon>
        <taxon>Methanosarcinaceae</taxon>
        <taxon>Methanosarcina</taxon>
    </lineage>
</organism>
<gene>
    <name evidence="1" type="primary">lysS2</name>
    <name type="ordered locus">MA_0760</name>
</gene>
<dbReference type="EC" id="6.1.1.6" evidence="1"/>
<dbReference type="EMBL" id="AE010299">
    <property type="protein sequence ID" value="AAM04200.1"/>
    <property type="molecule type" value="Genomic_DNA"/>
</dbReference>
<dbReference type="RefSeq" id="WP_011020805.1">
    <property type="nucleotide sequence ID" value="NC_003552.1"/>
</dbReference>
<dbReference type="SMR" id="Q8TSN5"/>
<dbReference type="STRING" id="188937.MA_0760"/>
<dbReference type="EnsemblBacteria" id="AAM04200">
    <property type="protein sequence ID" value="AAM04200"/>
    <property type="gene ID" value="MA_0760"/>
</dbReference>
<dbReference type="GeneID" id="1472652"/>
<dbReference type="KEGG" id="mac:MA_0760"/>
<dbReference type="HOGENOM" id="CLU_008255_6_0_2"/>
<dbReference type="InParanoid" id="Q8TSN5"/>
<dbReference type="OrthoDB" id="131570at2157"/>
<dbReference type="PhylomeDB" id="Q8TSN5"/>
<dbReference type="Proteomes" id="UP000002487">
    <property type="component" value="Chromosome"/>
</dbReference>
<dbReference type="GO" id="GO:0005737">
    <property type="term" value="C:cytoplasm"/>
    <property type="evidence" value="ECO:0000318"/>
    <property type="project" value="GO_Central"/>
</dbReference>
<dbReference type="GO" id="GO:0005524">
    <property type="term" value="F:ATP binding"/>
    <property type="evidence" value="ECO:0007669"/>
    <property type="project" value="UniProtKB-UniRule"/>
</dbReference>
<dbReference type="GO" id="GO:0004824">
    <property type="term" value="F:lysine-tRNA ligase activity"/>
    <property type="evidence" value="ECO:0000318"/>
    <property type="project" value="GO_Central"/>
</dbReference>
<dbReference type="GO" id="GO:0000287">
    <property type="term" value="F:magnesium ion binding"/>
    <property type="evidence" value="ECO:0007669"/>
    <property type="project" value="UniProtKB-UniRule"/>
</dbReference>
<dbReference type="GO" id="GO:0000049">
    <property type="term" value="F:tRNA binding"/>
    <property type="evidence" value="ECO:0000318"/>
    <property type="project" value="GO_Central"/>
</dbReference>
<dbReference type="GO" id="GO:0006430">
    <property type="term" value="P:lysyl-tRNA aminoacylation"/>
    <property type="evidence" value="ECO:0000318"/>
    <property type="project" value="GO_Central"/>
</dbReference>
<dbReference type="CDD" id="cd00775">
    <property type="entry name" value="LysRS_core"/>
    <property type="match status" value="1"/>
</dbReference>
<dbReference type="CDD" id="cd04322">
    <property type="entry name" value="LysRS_N"/>
    <property type="match status" value="1"/>
</dbReference>
<dbReference type="FunFam" id="2.40.50.140:FF:000024">
    <property type="entry name" value="Lysine--tRNA ligase"/>
    <property type="match status" value="1"/>
</dbReference>
<dbReference type="FunFam" id="3.30.930.10:FF:000151">
    <property type="entry name" value="Lysine--tRNA ligase"/>
    <property type="match status" value="1"/>
</dbReference>
<dbReference type="Gene3D" id="3.30.930.10">
    <property type="entry name" value="Bira Bifunctional Protein, Domain 2"/>
    <property type="match status" value="1"/>
</dbReference>
<dbReference type="Gene3D" id="2.40.50.140">
    <property type="entry name" value="Nucleic acid-binding proteins"/>
    <property type="match status" value="1"/>
</dbReference>
<dbReference type="HAMAP" id="MF_00252">
    <property type="entry name" value="Lys_tRNA_synth_class2"/>
    <property type="match status" value="1"/>
</dbReference>
<dbReference type="InterPro" id="IPR004364">
    <property type="entry name" value="Aa-tRNA-synt_II"/>
</dbReference>
<dbReference type="InterPro" id="IPR006195">
    <property type="entry name" value="aa-tRNA-synth_II"/>
</dbReference>
<dbReference type="InterPro" id="IPR045864">
    <property type="entry name" value="aa-tRNA-synth_II/BPL/LPL"/>
</dbReference>
<dbReference type="InterPro" id="IPR002313">
    <property type="entry name" value="Lys-tRNA-ligase_II"/>
</dbReference>
<dbReference type="InterPro" id="IPR044136">
    <property type="entry name" value="Lys-tRNA-ligase_II_N"/>
</dbReference>
<dbReference type="InterPro" id="IPR018149">
    <property type="entry name" value="Lys-tRNA-synth_II_C"/>
</dbReference>
<dbReference type="InterPro" id="IPR012340">
    <property type="entry name" value="NA-bd_OB-fold"/>
</dbReference>
<dbReference type="InterPro" id="IPR004365">
    <property type="entry name" value="NA-bd_OB_tRNA"/>
</dbReference>
<dbReference type="NCBIfam" id="TIGR00499">
    <property type="entry name" value="lysS_bact"/>
    <property type="match status" value="1"/>
</dbReference>
<dbReference type="NCBIfam" id="NF001756">
    <property type="entry name" value="PRK00484.1"/>
    <property type="match status" value="1"/>
</dbReference>
<dbReference type="PANTHER" id="PTHR42918:SF15">
    <property type="entry name" value="LYSINE--TRNA LIGASE, CHLOROPLASTIC_MITOCHONDRIAL"/>
    <property type="match status" value="1"/>
</dbReference>
<dbReference type="PANTHER" id="PTHR42918">
    <property type="entry name" value="LYSYL-TRNA SYNTHETASE"/>
    <property type="match status" value="1"/>
</dbReference>
<dbReference type="Pfam" id="PF00152">
    <property type="entry name" value="tRNA-synt_2"/>
    <property type="match status" value="1"/>
</dbReference>
<dbReference type="Pfam" id="PF01336">
    <property type="entry name" value="tRNA_anti-codon"/>
    <property type="match status" value="1"/>
</dbReference>
<dbReference type="PRINTS" id="PR00982">
    <property type="entry name" value="TRNASYNTHLYS"/>
</dbReference>
<dbReference type="SUPFAM" id="SSF55681">
    <property type="entry name" value="Class II aaRS and biotin synthetases"/>
    <property type="match status" value="1"/>
</dbReference>
<dbReference type="SUPFAM" id="SSF50249">
    <property type="entry name" value="Nucleic acid-binding proteins"/>
    <property type="match status" value="1"/>
</dbReference>
<dbReference type="PROSITE" id="PS50862">
    <property type="entry name" value="AA_TRNA_LIGASE_II"/>
    <property type="match status" value="1"/>
</dbReference>
<name>SYK2_METAC</name>